<evidence type="ECO:0000255" key="1">
    <source>
        <dbReference type="HAMAP-Rule" id="MF_00034"/>
    </source>
</evidence>
<proteinExistence type="inferred from homology"/>
<keyword id="KW-0963">Cytoplasm</keyword>
<keyword id="KW-0227">DNA damage</keyword>
<keyword id="KW-0233">DNA recombination</keyword>
<keyword id="KW-0234">DNA repair</keyword>
<keyword id="KW-0238">DNA-binding</keyword>
<keyword id="KW-0255">Endonuclease</keyword>
<keyword id="KW-0378">Hydrolase</keyword>
<keyword id="KW-0460">Magnesium</keyword>
<keyword id="KW-0479">Metal-binding</keyword>
<keyword id="KW-0540">Nuclease</keyword>
<comment type="function">
    <text evidence="1">The RuvA-RuvB-RuvC complex processes Holliday junction (HJ) DNA during genetic recombination and DNA repair. Endonuclease that resolves HJ intermediates. Cleaves cruciform DNA by making single-stranded nicks across the HJ at symmetrical positions within the homologous arms, yielding a 5'-phosphate and a 3'-hydroxyl group; requires a central core of homology in the junction. The consensus cleavage sequence is 5'-(A/T)TT(C/G)-3'. Cleavage occurs on the 3'-side of the TT dinucleotide at the point of strand exchange. HJ branch migration catalyzed by RuvA-RuvB allows RuvC to scan DNA until it finds its consensus sequence, where it cleaves and resolves the cruciform DNA.</text>
</comment>
<comment type="catalytic activity">
    <reaction evidence="1">
        <text>Endonucleolytic cleavage at a junction such as a reciprocal single-stranded crossover between two homologous DNA duplexes (Holliday junction).</text>
        <dbReference type="EC" id="3.1.21.10"/>
    </reaction>
</comment>
<comment type="cofactor">
    <cofactor evidence="1">
        <name>Mg(2+)</name>
        <dbReference type="ChEBI" id="CHEBI:18420"/>
    </cofactor>
    <text evidence="1">Binds 2 Mg(2+) ion per subunit.</text>
</comment>
<comment type="subunit">
    <text evidence="1">Homodimer which binds Holliday junction (HJ) DNA. The HJ becomes 2-fold symmetrical on binding to RuvC with unstacked arms; it has a different conformation from HJ DNA in complex with RuvA. In the full resolvosome a probable DNA-RuvA(4)-RuvB(12)-RuvC(2) complex forms which resolves the HJ.</text>
</comment>
<comment type="subcellular location">
    <subcellularLocation>
        <location evidence="1">Cytoplasm</location>
    </subcellularLocation>
</comment>
<comment type="similarity">
    <text evidence="1">Belongs to the RuvC family.</text>
</comment>
<accession>A6VA07</accession>
<feature type="chain" id="PRO_1000002799" description="Crossover junction endodeoxyribonuclease RuvC">
    <location>
        <begin position="1"/>
        <end position="174"/>
    </location>
</feature>
<feature type="active site" evidence="1">
    <location>
        <position position="8"/>
    </location>
</feature>
<feature type="active site" evidence="1">
    <location>
        <position position="67"/>
    </location>
</feature>
<feature type="active site" evidence="1">
    <location>
        <position position="139"/>
    </location>
</feature>
<feature type="binding site" evidence="1">
    <location>
        <position position="8"/>
    </location>
    <ligand>
        <name>Mg(2+)</name>
        <dbReference type="ChEBI" id="CHEBI:18420"/>
        <label>1</label>
    </ligand>
</feature>
<feature type="binding site" evidence="1">
    <location>
        <position position="67"/>
    </location>
    <ligand>
        <name>Mg(2+)</name>
        <dbReference type="ChEBI" id="CHEBI:18420"/>
        <label>2</label>
    </ligand>
</feature>
<feature type="binding site" evidence="1">
    <location>
        <position position="139"/>
    </location>
    <ligand>
        <name>Mg(2+)</name>
        <dbReference type="ChEBI" id="CHEBI:18420"/>
        <label>1</label>
    </ligand>
</feature>
<protein>
    <recommendedName>
        <fullName evidence="1">Crossover junction endodeoxyribonuclease RuvC</fullName>
        <ecNumber evidence="1">3.1.21.10</ecNumber>
    </recommendedName>
    <alternativeName>
        <fullName evidence="1">Holliday junction nuclease RuvC</fullName>
    </alternativeName>
    <alternativeName>
        <fullName evidence="1">Holliday junction resolvase RuvC</fullName>
    </alternativeName>
</protein>
<dbReference type="EC" id="3.1.21.10" evidence="1"/>
<dbReference type="EMBL" id="CP000744">
    <property type="protein sequence ID" value="ABR83226.1"/>
    <property type="molecule type" value="Genomic_DNA"/>
</dbReference>
<dbReference type="RefSeq" id="WP_003155980.1">
    <property type="nucleotide sequence ID" value="NC_009656.1"/>
</dbReference>
<dbReference type="SMR" id="A6VA07"/>
<dbReference type="KEGG" id="pap:PSPA7_4543"/>
<dbReference type="HOGENOM" id="CLU_091257_2_1_6"/>
<dbReference type="Proteomes" id="UP000001582">
    <property type="component" value="Chromosome"/>
</dbReference>
<dbReference type="GO" id="GO:0005737">
    <property type="term" value="C:cytoplasm"/>
    <property type="evidence" value="ECO:0007669"/>
    <property type="project" value="UniProtKB-SubCell"/>
</dbReference>
<dbReference type="GO" id="GO:0048476">
    <property type="term" value="C:Holliday junction resolvase complex"/>
    <property type="evidence" value="ECO:0007669"/>
    <property type="project" value="UniProtKB-UniRule"/>
</dbReference>
<dbReference type="GO" id="GO:0008821">
    <property type="term" value="F:crossover junction DNA endonuclease activity"/>
    <property type="evidence" value="ECO:0007669"/>
    <property type="project" value="UniProtKB-UniRule"/>
</dbReference>
<dbReference type="GO" id="GO:0003677">
    <property type="term" value="F:DNA binding"/>
    <property type="evidence" value="ECO:0007669"/>
    <property type="project" value="UniProtKB-KW"/>
</dbReference>
<dbReference type="GO" id="GO:0000287">
    <property type="term" value="F:magnesium ion binding"/>
    <property type="evidence" value="ECO:0007669"/>
    <property type="project" value="UniProtKB-UniRule"/>
</dbReference>
<dbReference type="GO" id="GO:0006310">
    <property type="term" value="P:DNA recombination"/>
    <property type="evidence" value="ECO:0007669"/>
    <property type="project" value="UniProtKB-UniRule"/>
</dbReference>
<dbReference type="GO" id="GO:0006281">
    <property type="term" value="P:DNA repair"/>
    <property type="evidence" value="ECO:0007669"/>
    <property type="project" value="UniProtKB-UniRule"/>
</dbReference>
<dbReference type="CDD" id="cd16962">
    <property type="entry name" value="RuvC"/>
    <property type="match status" value="1"/>
</dbReference>
<dbReference type="FunFam" id="3.30.420.10:FF:000002">
    <property type="entry name" value="Crossover junction endodeoxyribonuclease RuvC"/>
    <property type="match status" value="1"/>
</dbReference>
<dbReference type="Gene3D" id="3.30.420.10">
    <property type="entry name" value="Ribonuclease H-like superfamily/Ribonuclease H"/>
    <property type="match status" value="1"/>
</dbReference>
<dbReference type="HAMAP" id="MF_00034">
    <property type="entry name" value="RuvC"/>
    <property type="match status" value="1"/>
</dbReference>
<dbReference type="InterPro" id="IPR012337">
    <property type="entry name" value="RNaseH-like_sf"/>
</dbReference>
<dbReference type="InterPro" id="IPR036397">
    <property type="entry name" value="RNaseH_sf"/>
</dbReference>
<dbReference type="InterPro" id="IPR020563">
    <property type="entry name" value="X-over_junc_endoDNase_Mg_BS"/>
</dbReference>
<dbReference type="InterPro" id="IPR002176">
    <property type="entry name" value="X-over_junc_endoDNase_RuvC"/>
</dbReference>
<dbReference type="NCBIfam" id="TIGR00228">
    <property type="entry name" value="ruvC"/>
    <property type="match status" value="1"/>
</dbReference>
<dbReference type="PANTHER" id="PTHR30194">
    <property type="entry name" value="CROSSOVER JUNCTION ENDODEOXYRIBONUCLEASE RUVC"/>
    <property type="match status" value="1"/>
</dbReference>
<dbReference type="PANTHER" id="PTHR30194:SF3">
    <property type="entry name" value="CROSSOVER JUNCTION ENDODEOXYRIBONUCLEASE RUVC"/>
    <property type="match status" value="1"/>
</dbReference>
<dbReference type="Pfam" id="PF02075">
    <property type="entry name" value="RuvC"/>
    <property type="match status" value="1"/>
</dbReference>
<dbReference type="PRINTS" id="PR00696">
    <property type="entry name" value="RSOLVASERUVC"/>
</dbReference>
<dbReference type="SUPFAM" id="SSF53098">
    <property type="entry name" value="Ribonuclease H-like"/>
    <property type="match status" value="1"/>
</dbReference>
<dbReference type="PROSITE" id="PS01321">
    <property type="entry name" value="RUVC"/>
    <property type="match status" value="1"/>
</dbReference>
<gene>
    <name evidence="1" type="primary">ruvC</name>
    <name type="ordered locus">PSPA7_4543</name>
</gene>
<reference key="1">
    <citation type="submission" date="2007-06" db="EMBL/GenBank/DDBJ databases">
        <authorList>
            <person name="Dodson R.J."/>
            <person name="Harkins D."/>
            <person name="Paulsen I.T."/>
        </authorList>
    </citation>
    <scope>NUCLEOTIDE SEQUENCE [LARGE SCALE GENOMIC DNA]</scope>
    <source>
        <strain>DSM 24068 / PA7</strain>
    </source>
</reference>
<organism>
    <name type="scientific">Pseudomonas paraeruginosa (strain DSM 24068 / PA7)</name>
    <name type="common">Pseudomonas aeruginosa (strain PA7)</name>
    <dbReference type="NCBI Taxonomy" id="381754"/>
    <lineage>
        <taxon>Bacteria</taxon>
        <taxon>Pseudomonadati</taxon>
        <taxon>Pseudomonadota</taxon>
        <taxon>Gammaproteobacteria</taxon>
        <taxon>Pseudomonadales</taxon>
        <taxon>Pseudomonadaceae</taxon>
        <taxon>Pseudomonas</taxon>
        <taxon>Pseudomonas paraeruginosa</taxon>
    </lineage>
</organism>
<name>RUVC_PSEP7</name>
<sequence>MTLILGIDPGSRITGFGVVRETARGCEYVASGCIRTGNGPLHERLQVVFRSVREVIRTHGPTTLSIEQVFMARNADSALKLGQARGAAIVAAMEEGLSVAEYTASQVKQAVVGTGGADKQQVQMMVMHLLKLTQKPQIDASDALAIALCHAHTQQSLVPHGLVGARRRGGRLRL</sequence>